<proteinExistence type="evidence at transcript level"/>
<feature type="initiator methionine" description="Removed" evidence="2">
    <location>
        <position position="1"/>
    </location>
</feature>
<feature type="chain" id="PRO_0000290335" description="Protein transport protein Sec23A">
    <location>
        <begin position="2"/>
        <end position="765"/>
    </location>
</feature>
<feature type="repeat" description="Gelsolin-like" evidence="3">
    <location>
        <begin position="632"/>
        <end position="718"/>
    </location>
</feature>
<feature type="binding site" evidence="2">
    <location>
        <position position="61"/>
    </location>
    <ligand>
        <name>Zn(2+)</name>
        <dbReference type="ChEBI" id="CHEBI:29105"/>
    </ligand>
</feature>
<feature type="binding site" evidence="2">
    <location>
        <position position="66"/>
    </location>
    <ligand>
        <name>Zn(2+)</name>
        <dbReference type="ChEBI" id="CHEBI:29105"/>
    </ligand>
</feature>
<feature type="binding site" evidence="2">
    <location>
        <position position="85"/>
    </location>
    <ligand>
        <name>Zn(2+)</name>
        <dbReference type="ChEBI" id="CHEBI:29105"/>
    </ligand>
</feature>
<feature type="binding site" evidence="2">
    <location>
        <position position="88"/>
    </location>
    <ligand>
        <name>Zn(2+)</name>
        <dbReference type="ChEBI" id="CHEBI:29105"/>
    </ligand>
</feature>
<feature type="modified residue" description="N-acetylthreonine" evidence="2">
    <location>
        <position position="2"/>
    </location>
</feature>
<feature type="modified residue" description="Phosphothreonine" evidence="2">
    <location>
        <position position="308"/>
    </location>
</feature>
<comment type="function">
    <text evidence="1 2">Component of the coat protein complex II (COPII) which promotes the formation of transport vesicles from the endoplasmic reticulum (ER). The coat has two main functions, the physical deformation of the endoplasmic reticulum membrane into vesicles and the selection of cargo molecules for their transport to the Golgi complex. Required for the translocation of insulin-induced glucose transporter SLC2A4/GLUT4 to the cell membrane.</text>
</comment>
<comment type="subunit">
    <text evidence="2">COPII is composed of at least five proteins: the Sec23/24 complex, the Sec13/31 complex and Sar1. Interacts with SEC23IP. Interacts with HTR4. Interacts with SEC16A (By similarity). Interacts with SLC6A4 (By similarity). Interacts (as part of the Sec23/24 complex) with SEC22B; recruits SEC22B into COPII-coated vesicles and allows the transport of this cargo from the endoplasmic reticulum to the Golgi. Interacts (via Gelsolin-like repeat) with MIA2 and MIA3; specifically involved in the transport of large cargos like the collagen COL7A1. Interacts with DDHD1 (By similarity). Interacts with TMEM39A (By similarity). Interacts with SACM1L; this interaction is reduced in the absence of TMEM39A (By similarity). Interacts with kinase FAM20C; transport of FAM20C from the endoplasmic reticulum to the Golgi is likely to be mediated by COPII vesicles (By similarity).</text>
</comment>
<comment type="subcellular location">
    <subcellularLocation>
        <location evidence="2">Cytoplasmic vesicle</location>
        <location evidence="2">COPII-coated vesicle membrane</location>
        <topology evidence="2">Peripheral membrane protein</topology>
        <orientation evidence="2">Cytoplasmic side</orientation>
    </subcellularLocation>
    <subcellularLocation>
        <location evidence="2">Endoplasmic reticulum membrane</location>
        <topology evidence="2">Peripheral membrane protein</topology>
        <orientation evidence="2">Cytoplasmic side</orientation>
    </subcellularLocation>
    <subcellularLocation>
        <location evidence="2">Cytoplasm</location>
        <location evidence="2">Cytosol</location>
    </subcellularLocation>
    <text evidence="2">Enriched at endoplasmic reticulum exit sites (ERES), also known as transitional endoplasmic reticulum (tER).</text>
</comment>
<comment type="domain">
    <text evidence="2">The Gelsolin-like repeat mediates interaction with proteins containing PPP motifs that include MIA2, MIA3 but also SEC31A. These interactions are probably competitive.</text>
</comment>
<comment type="similarity">
    <text evidence="4">Belongs to the SEC23/SEC24 family. SEC23 subfamily.</text>
</comment>
<name>SC23A_PONAB</name>
<gene>
    <name evidence="2" type="primary">SEC23A</name>
</gene>
<dbReference type="EMBL" id="CR859342">
    <property type="protein sequence ID" value="CAH91517.1"/>
    <property type="molecule type" value="mRNA"/>
</dbReference>
<dbReference type="RefSeq" id="NP_001128817.1">
    <property type="nucleotide sequence ID" value="NM_001135345.1"/>
</dbReference>
<dbReference type="SMR" id="Q5R9P3"/>
<dbReference type="FunCoup" id="Q5R9P3">
    <property type="interactions" value="2619"/>
</dbReference>
<dbReference type="STRING" id="9601.ENSPPYP00000006547"/>
<dbReference type="GeneID" id="100173678"/>
<dbReference type="CTD" id="10484"/>
<dbReference type="eggNOG" id="KOG1986">
    <property type="taxonomic scope" value="Eukaryota"/>
</dbReference>
<dbReference type="InParanoid" id="Q5R9P3"/>
<dbReference type="Proteomes" id="UP000001595">
    <property type="component" value="Unplaced"/>
</dbReference>
<dbReference type="GO" id="GO:0030127">
    <property type="term" value="C:COPII vesicle coat"/>
    <property type="evidence" value="ECO:0000250"/>
    <property type="project" value="UniProtKB"/>
</dbReference>
<dbReference type="GO" id="GO:0005829">
    <property type="term" value="C:cytosol"/>
    <property type="evidence" value="ECO:0000250"/>
    <property type="project" value="UniProtKB"/>
</dbReference>
<dbReference type="GO" id="GO:0070971">
    <property type="term" value="C:endoplasmic reticulum exit site"/>
    <property type="evidence" value="ECO:0000250"/>
    <property type="project" value="UniProtKB"/>
</dbReference>
<dbReference type="GO" id="GO:0005789">
    <property type="term" value="C:endoplasmic reticulum membrane"/>
    <property type="evidence" value="ECO:0007669"/>
    <property type="project" value="UniProtKB-SubCell"/>
</dbReference>
<dbReference type="GO" id="GO:0005096">
    <property type="term" value="F:GTPase activator activity"/>
    <property type="evidence" value="ECO:0007669"/>
    <property type="project" value="TreeGrafter"/>
</dbReference>
<dbReference type="GO" id="GO:0008270">
    <property type="term" value="F:zinc ion binding"/>
    <property type="evidence" value="ECO:0000250"/>
    <property type="project" value="UniProtKB"/>
</dbReference>
<dbReference type="GO" id="GO:0090110">
    <property type="term" value="P:COPII-coated vesicle cargo loading"/>
    <property type="evidence" value="ECO:0000250"/>
    <property type="project" value="UniProtKB"/>
</dbReference>
<dbReference type="GO" id="GO:0006886">
    <property type="term" value="P:intracellular protein transport"/>
    <property type="evidence" value="ECO:0007669"/>
    <property type="project" value="InterPro"/>
</dbReference>
<dbReference type="CDD" id="cd01478">
    <property type="entry name" value="Sec23-like"/>
    <property type="match status" value="1"/>
</dbReference>
<dbReference type="CDD" id="cd11287">
    <property type="entry name" value="Sec23_C"/>
    <property type="match status" value="1"/>
</dbReference>
<dbReference type="FunFam" id="1.20.120.730:FF:000003">
    <property type="entry name" value="Protein transport protein SEC23"/>
    <property type="match status" value="1"/>
</dbReference>
<dbReference type="FunFam" id="2.30.30.380:FF:000001">
    <property type="entry name" value="Protein transport protein SEC23"/>
    <property type="match status" value="1"/>
</dbReference>
<dbReference type="FunFam" id="2.60.40.1670:FF:000006">
    <property type="entry name" value="Protein transport protein SEC23"/>
    <property type="match status" value="1"/>
</dbReference>
<dbReference type="FunFam" id="3.40.20.10:FF:000003">
    <property type="entry name" value="Protein transport protein SEC23"/>
    <property type="match status" value="1"/>
</dbReference>
<dbReference type="FunFam" id="3.40.50.410:FF:000011">
    <property type="entry name" value="Protein transport protein SEC23"/>
    <property type="match status" value="1"/>
</dbReference>
<dbReference type="Gene3D" id="2.60.40.1670">
    <property type="entry name" value="beta-sandwich domain of Sec23/24"/>
    <property type="match status" value="1"/>
</dbReference>
<dbReference type="Gene3D" id="1.20.120.730">
    <property type="entry name" value="Sec23/Sec24 helical domain"/>
    <property type="match status" value="1"/>
</dbReference>
<dbReference type="Gene3D" id="3.40.20.10">
    <property type="entry name" value="Severin"/>
    <property type="match status" value="1"/>
</dbReference>
<dbReference type="Gene3D" id="3.40.50.410">
    <property type="entry name" value="von Willebrand factor, type A domain"/>
    <property type="match status" value="1"/>
</dbReference>
<dbReference type="Gene3D" id="2.30.30.380">
    <property type="entry name" value="Zn-finger domain of Sec23/24"/>
    <property type="match status" value="1"/>
</dbReference>
<dbReference type="InterPro" id="IPR029006">
    <property type="entry name" value="ADF-H/Gelsolin-like_dom_sf"/>
</dbReference>
<dbReference type="InterPro" id="IPR007123">
    <property type="entry name" value="Gelsolin-like_dom"/>
</dbReference>
<dbReference type="InterPro" id="IPR036180">
    <property type="entry name" value="Gelsolin-like_dom_sf"/>
</dbReference>
<dbReference type="InterPro" id="IPR037364">
    <property type="entry name" value="Sec23"/>
</dbReference>
<dbReference type="InterPro" id="IPR006900">
    <property type="entry name" value="Sec23/24_helical_dom"/>
</dbReference>
<dbReference type="InterPro" id="IPR036175">
    <property type="entry name" value="Sec23/24_helical_dom_sf"/>
</dbReference>
<dbReference type="InterPro" id="IPR006896">
    <property type="entry name" value="Sec23/24_trunk_dom"/>
</dbReference>
<dbReference type="InterPro" id="IPR012990">
    <property type="entry name" value="Sec23_24_beta_S"/>
</dbReference>
<dbReference type="InterPro" id="IPR037550">
    <property type="entry name" value="Sec23_C"/>
</dbReference>
<dbReference type="InterPro" id="IPR036465">
    <property type="entry name" value="vWFA_dom_sf"/>
</dbReference>
<dbReference type="InterPro" id="IPR006895">
    <property type="entry name" value="Znf_Sec23_Sec24"/>
</dbReference>
<dbReference type="InterPro" id="IPR036174">
    <property type="entry name" value="Znf_Sec23_Sec24_sf"/>
</dbReference>
<dbReference type="PANTHER" id="PTHR11141">
    <property type="entry name" value="PROTEIN TRANSPORT PROTEIN SEC23"/>
    <property type="match status" value="1"/>
</dbReference>
<dbReference type="PANTHER" id="PTHR11141:SF7">
    <property type="entry name" value="PROTEIN TRANSPORT PROTEIN SEC23A"/>
    <property type="match status" value="1"/>
</dbReference>
<dbReference type="Pfam" id="PF00626">
    <property type="entry name" value="Gelsolin"/>
    <property type="match status" value="1"/>
</dbReference>
<dbReference type="Pfam" id="PF08033">
    <property type="entry name" value="Sec23_BS"/>
    <property type="match status" value="1"/>
</dbReference>
<dbReference type="Pfam" id="PF04815">
    <property type="entry name" value="Sec23_helical"/>
    <property type="match status" value="1"/>
</dbReference>
<dbReference type="Pfam" id="PF04811">
    <property type="entry name" value="Sec23_trunk"/>
    <property type="match status" value="1"/>
</dbReference>
<dbReference type="Pfam" id="PF04810">
    <property type="entry name" value="zf-Sec23_Sec24"/>
    <property type="match status" value="1"/>
</dbReference>
<dbReference type="SUPFAM" id="SSF81995">
    <property type="entry name" value="beta-sandwich domain of Sec23/24"/>
    <property type="match status" value="1"/>
</dbReference>
<dbReference type="SUPFAM" id="SSF82754">
    <property type="entry name" value="C-terminal, gelsolin-like domain of Sec23/24"/>
    <property type="match status" value="1"/>
</dbReference>
<dbReference type="SUPFAM" id="SSF81811">
    <property type="entry name" value="Helical domain of Sec23/24"/>
    <property type="match status" value="1"/>
</dbReference>
<dbReference type="SUPFAM" id="SSF53300">
    <property type="entry name" value="vWA-like"/>
    <property type="match status" value="1"/>
</dbReference>
<dbReference type="SUPFAM" id="SSF82919">
    <property type="entry name" value="Zn-finger domain of Sec23/24"/>
    <property type="match status" value="1"/>
</dbReference>
<sequence length="765" mass="86121">MTTYLEFIQQNEERDGVRFSWNVWPSSRLEATRMVVPVAALFTPLKERPDSPPIQYEPVLCSRTTCRAVLNPLCQVDYRAKLWACNFCYQRNQFPPSYAGISELNQPAELLPQFSSIEYVVLRGPQMPLIFLYVVDTCMEDEDLQALKESMQMSLSLLPPTALVGLITFGRMVQVHELGCEGISKSYVFRGTKDLSAKQLQEMLGLSKVPVTQATRGPQVQQPPPSNRFLQPVQKIDMNLTDLLGELQRDPWPVPQGKRPLRSSGVALSIAVGLLECTFPNTGARIMMFIGGPATQGPGMVVGDELKTPIRSWHDIDKDNAKYVKKGTKHFEALANRAATTGHVIDIYACALDQTGLLEMKCCPNLTGGYMVMGDSFNTSLFKQTFQRVFTKDMHGQFKMGFGGTLEIKTSREIKISGAIGPCVSLNSKGPCVSENEIGTGGTCQWKICGLSPTTTLAIYFEVVNQHNAPIPQGGRGAIQFVTQYQHSSGQRRIRVTTIARNWADAQTQIQNIAASFDQEAAAILMARLAIYRAETEEGPDVLRWLDRQLIRLCQKFGEYHKDDPSSFRFSETFSLYPQFMFHLRRSSFLQVFNNSPDESSYYRHHFMRQDLTQSLIMIQPILYAYSFSGPPEPVLLDSSSILADRILLMDTFFQILIYHGETIAQWRKSGYQDMPEYENFRHLLQAPVDDAQEILHSRFPMPRYIDTEHGGSQARFLLSKVNPSQTHNNMYAWGQESGAPILTDDVSLQVFMDHLKKLAVSSAA</sequence>
<reference key="1">
    <citation type="submission" date="2004-11" db="EMBL/GenBank/DDBJ databases">
        <authorList>
            <consortium name="The German cDNA consortium"/>
        </authorList>
    </citation>
    <scope>NUCLEOTIDE SEQUENCE [LARGE SCALE MRNA]</scope>
    <source>
        <tissue>Brain cortex</tissue>
    </source>
</reference>
<accession>Q5R9P3</accession>
<protein>
    <recommendedName>
        <fullName evidence="4">Protein transport protein Sec23A</fullName>
    </recommendedName>
    <alternativeName>
        <fullName>SEC23-related protein A</fullName>
    </alternativeName>
</protein>
<keyword id="KW-0007">Acetylation</keyword>
<keyword id="KW-0963">Cytoplasm</keyword>
<keyword id="KW-0968">Cytoplasmic vesicle</keyword>
<keyword id="KW-0256">Endoplasmic reticulum</keyword>
<keyword id="KW-0931">ER-Golgi transport</keyword>
<keyword id="KW-0472">Membrane</keyword>
<keyword id="KW-0479">Metal-binding</keyword>
<keyword id="KW-0597">Phosphoprotein</keyword>
<keyword id="KW-0653">Protein transport</keyword>
<keyword id="KW-1185">Reference proteome</keyword>
<keyword id="KW-0813">Transport</keyword>
<keyword id="KW-0862">Zinc</keyword>
<organism>
    <name type="scientific">Pongo abelii</name>
    <name type="common">Sumatran orangutan</name>
    <name type="synonym">Pongo pygmaeus abelii</name>
    <dbReference type="NCBI Taxonomy" id="9601"/>
    <lineage>
        <taxon>Eukaryota</taxon>
        <taxon>Metazoa</taxon>
        <taxon>Chordata</taxon>
        <taxon>Craniata</taxon>
        <taxon>Vertebrata</taxon>
        <taxon>Euteleostomi</taxon>
        <taxon>Mammalia</taxon>
        <taxon>Eutheria</taxon>
        <taxon>Euarchontoglires</taxon>
        <taxon>Primates</taxon>
        <taxon>Haplorrhini</taxon>
        <taxon>Catarrhini</taxon>
        <taxon>Hominidae</taxon>
        <taxon>Pongo</taxon>
    </lineage>
</organism>
<evidence type="ECO:0000250" key="1">
    <source>
        <dbReference type="UniProtKB" id="Q01405"/>
    </source>
</evidence>
<evidence type="ECO:0000250" key="2">
    <source>
        <dbReference type="UniProtKB" id="Q15436"/>
    </source>
</evidence>
<evidence type="ECO:0000255" key="3"/>
<evidence type="ECO:0000305" key="4"/>